<dbReference type="EMBL" id="AP000423">
    <property type="protein sequence ID" value="BAA84420.1"/>
    <property type="molecule type" value="Genomic_DNA"/>
</dbReference>
<dbReference type="RefSeq" id="NP_051093.1">
    <property type="nucleotide sequence ID" value="NC_000932.1"/>
</dbReference>
<dbReference type="SMR" id="P56801"/>
<dbReference type="BioGRID" id="29930">
    <property type="interactions" value="22"/>
</dbReference>
<dbReference type="FunCoup" id="P56801">
    <property type="interactions" value="166"/>
</dbReference>
<dbReference type="STRING" id="3702.P56801"/>
<dbReference type="PaxDb" id="3702-ATCG00770.1"/>
<dbReference type="ProteomicsDB" id="228248"/>
<dbReference type="EnsemblPlants" id="ATCG00770.1">
    <property type="protein sequence ID" value="ATCG00770.1"/>
    <property type="gene ID" value="ATCG00770"/>
</dbReference>
<dbReference type="GeneID" id="844724"/>
<dbReference type="Gramene" id="ATCG00770.1">
    <property type="protein sequence ID" value="ATCG00770.1"/>
    <property type="gene ID" value="ATCG00770"/>
</dbReference>
<dbReference type="KEGG" id="ath:ArthCp058"/>
<dbReference type="Araport" id="ATCG00770"/>
<dbReference type="TAIR" id="ATCG00770">
    <property type="gene designation" value="RPS8"/>
</dbReference>
<dbReference type="eggNOG" id="KOG1754">
    <property type="taxonomic scope" value="Eukaryota"/>
</dbReference>
<dbReference type="HOGENOM" id="CLU_098428_0_2_1"/>
<dbReference type="InParanoid" id="P56801"/>
<dbReference type="OMA" id="NSAYHDT"/>
<dbReference type="PRO" id="PR:P56801"/>
<dbReference type="Proteomes" id="UP000006548">
    <property type="component" value="Chloroplast Pltd"/>
</dbReference>
<dbReference type="ExpressionAtlas" id="P56801">
    <property type="expression patterns" value="baseline and differential"/>
</dbReference>
<dbReference type="GO" id="GO:0009507">
    <property type="term" value="C:chloroplast"/>
    <property type="evidence" value="ECO:0007005"/>
    <property type="project" value="TAIR"/>
</dbReference>
<dbReference type="GO" id="GO:0009941">
    <property type="term" value="C:chloroplast envelope"/>
    <property type="evidence" value="ECO:0007005"/>
    <property type="project" value="TAIR"/>
</dbReference>
<dbReference type="GO" id="GO:0009570">
    <property type="term" value="C:chloroplast stroma"/>
    <property type="evidence" value="ECO:0007005"/>
    <property type="project" value="TAIR"/>
</dbReference>
<dbReference type="GO" id="GO:0009536">
    <property type="term" value="C:plastid"/>
    <property type="evidence" value="ECO:0007005"/>
    <property type="project" value="TAIR"/>
</dbReference>
<dbReference type="GO" id="GO:1990904">
    <property type="term" value="C:ribonucleoprotein complex"/>
    <property type="evidence" value="ECO:0007669"/>
    <property type="project" value="UniProtKB-KW"/>
</dbReference>
<dbReference type="GO" id="GO:0005840">
    <property type="term" value="C:ribosome"/>
    <property type="evidence" value="ECO:0007669"/>
    <property type="project" value="UniProtKB-KW"/>
</dbReference>
<dbReference type="GO" id="GO:0019843">
    <property type="term" value="F:rRNA binding"/>
    <property type="evidence" value="ECO:0007669"/>
    <property type="project" value="UniProtKB-UniRule"/>
</dbReference>
<dbReference type="GO" id="GO:0003735">
    <property type="term" value="F:structural constituent of ribosome"/>
    <property type="evidence" value="ECO:0007669"/>
    <property type="project" value="InterPro"/>
</dbReference>
<dbReference type="GO" id="GO:0006412">
    <property type="term" value="P:translation"/>
    <property type="evidence" value="ECO:0007669"/>
    <property type="project" value="UniProtKB-UniRule"/>
</dbReference>
<dbReference type="FunFam" id="3.30.1490.10:FF:000001">
    <property type="entry name" value="30S ribosomal protein S8"/>
    <property type="match status" value="1"/>
</dbReference>
<dbReference type="FunFam" id="3.30.1370.30:FF:000004">
    <property type="entry name" value="30S ribosomal protein S8, chloroplastic"/>
    <property type="match status" value="1"/>
</dbReference>
<dbReference type="Gene3D" id="3.30.1370.30">
    <property type="match status" value="1"/>
</dbReference>
<dbReference type="Gene3D" id="3.30.1490.10">
    <property type="match status" value="1"/>
</dbReference>
<dbReference type="HAMAP" id="MF_01302_B">
    <property type="entry name" value="Ribosomal_uS8_B"/>
    <property type="match status" value="1"/>
</dbReference>
<dbReference type="InterPro" id="IPR000630">
    <property type="entry name" value="Ribosomal_uS8"/>
</dbReference>
<dbReference type="InterPro" id="IPR047863">
    <property type="entry name" value="Ribosomal_uS8_CS"/>
</dbReference>
<dbReference type="InterPro" id="IPR035987">
    <property type="entry name" value="Ribosomal_uS8_sf"/>
</dbReference>
<dbReference type="NCBIfam" id="NF001109">
    <property type="entry name" value="PRK00136.1"/>
    <property type="match status" value="1"/>
</dbReference>
<dbReference type="PANTHER" id="PTHR11758">
    <property type="entry name" value="40S RIBOSOMAL PROTEIN S15A"/>
    <property type="match status" value="1"/>
</dbReference>
<dbReference type="Pfam" id="PF00410">
    <property type="entry name" value="Ribosomal_S8"/>
    <property type="match status" value="1"/>
</dbReference>
<dbReference type="SUPFAM" id="SSF56047">
    <property type="entry name" value="Ribosomal protein S8"/>
    <property type="match status" value="1"/>
</dbReference>
<dbReference type="PROSITE" id="PS00053">
    <property type="entry name" value="RIBOSOMAL_S8"/>
    <property type="match status" value="1"/>
</dbReference>
<sequence>MGKDTIADIITSIRNADMNRKGTVRIGSTNITESIVKILLREGFIENVRKHRENNQYFLILTLRHRRNKKESYKTILNLKRISRPGLRIYSNSQRIPRILGGIGIVILSTSQGIMTDREARLKRIGGEILCYIW</sequence>
<organism>
    <name type="scientific">Arabidopsis thaliana</name>
    <name type="common">Mouse-ear cress</name>
    <dbReference type="NCBI Taxonomy" id="3702"/>
    <lineage>
        <taxon>Eukaryota</taxon>
        <taxon>Viridiplantae</taxon>
        <taxon>Streptophyta</taxon>
        <taxon>Embryophyta</taxon>
        <taxon>Tracheophyta</taxon>
        <taxon>Spermatophyta</taxon>
        <taxon>Magnoliopsida</taxon>
        <taxon>eudicotyledons</taxon>
        <taxon>Gunneridae</taxon>
        <taxon>Pentapetalae</taxon>
        <taxon>rosids</taxon>
        <taxon>malvids</taxon>
        <taxon>Brassicales</taxon>
        <taxon>Brassicaceae</taxon>
        <taxon>Camelineae</taxon>
        <taxon>Arabidopsis</taxon>
    </lineage>
</organism>
<reference key="1">
    <citation type="journal article" date="1999" name="DNA Res.">
        <title>Complete structure of the chloroplast genome of Arabidopsis thaliana.</title>
        <authorList>
            <person name="Sato S."/>
            <person name="Nakamura Y."/>
            <person name="Kaneko T."/>
            <person name="Asamizu E."/>
            <person name="Tabata S."/>
        </authorList>
    </citation>
    <scope>NUCLEOTIDE SEQUENCE [LARGE SCALE GENOMIC DNA]</scope>
    <source>
        <strain>cv. Columbia</strain>
    </source>
</reference>
<reference key="2">
    <citation type="journal article" date="2023" name="Plant Cell">
        <title>An updated nomenclature for plant ribosomal protein genes.</title>
        <authorList>
            <person name="Scarpin M.R."/>
            <person name="Busche M."/>
            <person name="Martinez R.E."/>
            <person name="Harper L.C."/>
            <person name="Reiser L."/>
            <person name="Szakonyi D."/>
            <person name="Merchante C."/>
            <person name="Lan T."/>
            <person name="Xiong W."/>
            <person name="Mo B."/>
            <person name="Tang G."/>
            <person name="Chen X."/>
            <person name="Bailey-Serres J."/>
            <person name="Browning K.S."/>
            <person name="Brunkard J.O."/>
        </authorList>
    </citation>
    <scope>NOMENCLATURE</scope>
</reference>
<protein>
    <recommendedName>
        <fullName evidence="2">Small ribosomal subunit protein uS8c</fullName>
    </recommendedName>
    <alternativeName>
        <fullName>30S ribosomal protein S8, chloroplastic</fullName>
    </alternativeName>
</protein>
<geneLocation type="chloroplast"/>
<feature type="chain" id="PRO_0000126561" description="Small ribosomal subunit protein uS8c">
    <location>
        <begin position="1"/>
        <end position="134"/>
    </location>
</feature>
<evidence type="ECO:0000250" key="1"/>
<evidence type="ECO:0000303" key="2">
    <source>
    </source>
</evidence>
<evidence type="ECO:0000305" key="3"/>
<proteinExistence type="inferred from homology"/>
<comment type="function">
    <text evidence="1">One of the primary rRNA binding proteins, it binds directly to 16S rRNA central domain where it helps coordinate assembly of the platform of the 30S subunit.</text>
</comment>
<comment type="subunit">
    <text evidence="1">Part of the 30S ribosomal subunit.</text>
</comment>
<comment type="subcellular location">
    <subcellularLocation>
        <location>Plastid</location>
        <location>Chloroplast</location>
    </subcellularLocation>
</comment>
<comment type="similarity">
    <text evidence="3">Belongs to the universal ribosomal protein uS8 family.</text>
</comment>
<accession>P56801</accession>
<keyword id="KW-0150">Chloroplast</keyword>
<keyword id="KW-0934">Plastid</keyword>
<keyword id="KW-1185">Reference proteome</keyword>
<keyword id="KW-0687">Ribonucleoprotein</keyword>
<keyword id="KW-0689">Ribosomal protein</keyword>
<keyword id="KW-0694">RNA-binding</keyword>
<keyword id="KW-0699">rRNA-binding</keyword>
<gene>
    <name type="primary">rps8</name>
    <name type="ordered locus">AtCg00770</name>
</gene>
<name>RR8_ARATH</name>